<name>FMT_DICNV</name>
<comment type="function">
    <text evidence="1">Attaches a formyl group to the free amino group of methionyl-tRNA(fMet). The formyl group appears to play a dual role in the initiator identity of N-formylmethionyl-tRNA by promoting its recognition by IF2 and preventing the misappropriation of this tRNA by the elongation apparatus.</text>
</comment>
<comment type="catalytic activity">
    <reaction evidence="1">
        <text>L-methionyl-tRNA(fMet) + (6R)-10-formyltetrahydrofolate = N-formyl-L-methionyl-tRNA(fMet) + (6S)-5,6,7,8-tetrahydrofolate + H(+)</text>
        <dbReference type="Rhea" id="RHEA:24380"/>
        <dbReference type="Rhea" id="RHEA-COMP:9952"/>
        <dbReference type="Rhea" id="RHEA-COMP:9953"/>
        <dbReference type="ChEBI" id="CHEBI:15378"/>
        <dbReference type="ChEBI" id="CHEBI:57453"/>
        <dbReference type="ChEBI" id="CHEBI:78530"/>
        <dbReference type="ChEBI" id="CHEBI:78844"/>
        <dbReference type="ChEBI" id="CHEBI:195366"/>
        <dbReference type="EC" id="2.1.2.9"/>
    </reaction>
</comment>
<comment type="similarity">
    <text evidence="1">Belongs to the Fmt family.</text>
</comment>
<feature type="chain" id="PRO_1000203853" description="Methionyl-tRNA formyltransferase">
    <location>
        <begin position="1"/>
        <end position="314"/>
    </location>
</feature>
<feature type="binding site" evidence="1">
    <location>
        <begin position="110"/>
        <end position="113"/>
    </location>
    <ligand>
        <name>(6S)-5,6,7,8-tetrahydrofolate</name>
        <dbReference type="ChEBI" id="CHEBI:57453"/>
    </ligand>
</feature>
<reference key="1">
    <citation type="journal article" date="2007" name="Nat. Biotechnol.">
        <title>Genome sequence and identification of candidate vaccine antigens from the animal pathogen Dichelobacter nodosus.</title>
        <authorList>
            <person name="Myers G.S.A."/>
            <person name="Parker D."/>
            <person name="Al-Hasani K."/>
            <person name="Kennan R.M."/>
            <person name="Seemann T."/>
            <person name="Ren Q."/>
            <person name="Badger J.H."/>
            <person name="Selengut J.D."/>
            <person name="Deboy R.T."/>
            <person name="Tettelin H."/>
            <person name="Boyce J.D."/>
            <person name="McCarl V.P."/>
            <person name="Han X."/>
            <person name="Nelson W.C."/>
            <person name="Madupu R."/>
            <person name="Mohamoud Y."/>
            <person name="Holley T."/>
            <person name="Fedorova N."/>
            <person name="Khouri H."/>
            <person name="Bottomley S.P."/>
            <person name="Whittington R.J."/>
            <person name="Adler B."/>
            <person name="Songer J.G."/>
            <person name="Rood J.I."/>
            <person name="Paulsen I.T."/>
        </authorList>
    </citation>
    <scope>NUCLEOTIDE SEQUENCE [LARGE SCALE GENOMIC DNA]</scope>
    <source>
        <strain>VCS1703A</strain>
    </source>
</reference>
<organism>
    <name type="scientific">Dichelobacter nodosus (strain VCS1703A)</name>
    <dbReference type="NCBI Taxonomy" id="246195"/>
    <lineage>
        <taxon>Bacteria</taxon>
        <taxon>Pseudomonadati</taxon>
        <taxon>Pseudomonadota</taxon>
        <taxon>Gammaproteobacteria</taxon>
        <taxon>Cardiobacteriales</taxon>
        <taxon>Cardiobacteriaceae</taxon>
        <taxon>Dichelobacter</taxon>
    </lineage>
</organism>
<proteinExistence type="inferred from homology"/>
<sequence length="314" mass="34078">MIKPQIWFAGTPEFATAALDALVKHVSVAGVLTQPDRPAGRGRKLKASAVKARAEHYQLPIAQPERLQESAPPFAHLPRPDIVVVVAYGLLLPQWFLDYPRLGCINIHASLLPRWRGAAPIQRAIEAGDEETGISIMQMDAGLDTGAVWLEKRLPIGEQSASQLHDALMQLGAEALIDVLPDILAQARAPIPQPSSGACYAHKLSKAEAEINWQDDAANIVRKIRAFDLFPVAYSYLDDAPVRFYDGIALSEHTESAPAGTVIEHNQEGIDIVCGSGILRIKRLQLAGKNVVSAAALANGCHLKGRHFARKNQL</sequence>
<gene>
    <name evidence="1" type="primary">fmt</name>
    <name type="ordered locus">DNO_0157</name>
</gene>
<keyword id="KW-0648">Protein biosynthesis</keyword>
<keyword id="KW-1185">Reference proteome</keyword>
<keyword id="KW-0808">Transferase</keyword>
<protein>
    <recommendedName>
        <fullName evidence="1">Methionyl-tRNA formyltransferase</fullName>
        <ecNumber evidence="1">2.1.2.9</ecNumber>
    </recommendedName>
</protein>
<dbReference type="EC" id="2.1.2.9" evidence="1"/>
<dbReference type="EMBL" id="CP000513">
    <property type="protein sequence ID" value="ABQ13272.1"/>
    <property type="molecule type" value="Genomic_DNA"/>
</dbReference>
<dbReference type="RefSeq" id="WP_011927908.1">
    <property type="nucleotide sequence ID" value="NC_009446.1"/>
</dbReference>
<dbReference type="SMR" id="A5EWL9"/>
<dbReference type="STRING" id="246195.DNO_0157"/>
<dbReference type="KEGG" id="dno:DNO_0157"/>
<dbReference type="eggNOG" id="COG0223">
    <property type="taxonomic scope" value="Bacteria"/>
</dbReference>
<dbReference type="HOGENOM" id="CLU_033347_1_2_6"/>
<dbReference type="OrthoDB" id="9802815at2"/>
<dbReference type="Proteomes" id="UP000000248">
    <property type="component" value="Chromosome"/>
</dbReference>
<dbReference type="GO" id="GO:0005829">
    <property type="term" value="C:cytosol"/>
    <property type="evidence" value="ECO:0007669"/>
    <property type="project" value="TreeGrafter"/>
</dbReference>
<dbReference type="GO" id="GO:0004479">
    <property type="term" value="F:methionyl-tRNA formyltransferase activity"/>
    <property type="evidence" value="ECO:0007669"/>
    <property type="project" value="UniProtKB-UniRule"/>
</dbReference>
<dbReference type="CDD" id="cd08646">
    <property type="entry name" value="FMT_core_Met-tRNA-FMT_N"/>
    <property type="match status" value="1"/>
</dbReference>
<dbReference type="CDD" id="cd08704">
    <property type="entry name" value="Met_tRNA_FMT_C"/>
    <property type="match status" value="1"/>
</dbReference>
<dbReference type="Gene3D" id="3.40.50.12230">
    <property type="match status" value="1"/>
</dbReference>
<dbReference type="HAMAP" id="MF_00182">
    <property type="entry name" value="Formyl_trans"/>
    <property type="match status" value="1"/>
</dbReference>
<dbReference type="InterPro" id="IPR005794">
    <property type="entry name" value="Fmt"/>
</dbReference>
<dbReference type="InterPro" id="IPR005793">
    <property type="entry name" value="Formyl_trans_C"/>
</dbReference>
<dbReference type="InterPro" id="IPR002376">
    <property type="entry name" value="Formyl_transf_N"/>
</dbReference>
<dbReference type="InterPro" id="IPR036477">
    <property type="entry name" value="Formyl_transf_N_sf"/>
</dbReference>
<dbReference type="InterPro" id="IPR011034">
    <property type="entry name" value="Formyl_transferase-like_C_sf"/>
</dbReference>
<dbReference type="InterPro" id="IPR044135">
    <property type="entry name" value="Met-tRNA-FMT_C"/>
</dbReference>
<dbReference type="InterPro" id="IPR041711">
    <property type="entry name" value="Met-tRNA-FMT_N"/>
</dbReference>
<dbReference type="NCBIfam" id="TIGR00460">
    <property type="entry name" value="fmt"/>
    <property type="match status" value="1"/>
</dbReference>
<dbReference type="PANTHER" id="PTHR11138">
    <property type="entry name" value="METHIONYL-TRNA FORMYLTRANSFERASE"/>
    <property type="match status" value="1"/>
</dbReference>
<dbReference type="PANTHER" id="PTHR11138:SF5">
    <property type="entry name" value="METHIONYL-TRNA FORMYLTRANSFERASE, MITOCHONDRIAL"/>
    <property type="match status" value="1"/>
</dbReference>
<dbReference type="Pfam" id="PF02911">
    <property type="entry name" value="Formyl_trans_C"/>
    <property type="match status" value="1"/>
</dbReference>
<dbReference type="Pfam" id="PF00551">
    <property type="entry name" value="Formyl_trans_N"/>
    <property type="match status" value="1"/>
</dbReference>
<dbReference type="SUPFAM" id="SSF50486">
    <property type="entry name" value="FMT C-terminal domain-like"/>
    <property type="match status" value="1"/>
</dbReference>
<dbReference type="SUPFAM" id="SSF53328">
    <property type="entry name" value="Formyltransferase"/>
    <property type="match status" value="1"/>
</dbReference>
<accession>A5EWL9</accession>
<evidence type="ECO:0000255" key="1">
    <source>
        <dbReference type="HAMAP-Rule" id="MF_00182"/>
    </source>
</evidence>